<name>PGK_YERPN</name>
<proteinExistence type="inferred from homology"/>
<gene>
    <name evidence="1" type="primary">pgk</name>
    <name type="ordered locus">YPN_3120</name>
    <name type="ORF">YP516_3542</name>
</gene>
<comment type="catalytic activity">
    <reaction evidence="1">
        <text>(2R)-3-phosphoglycerate + ATP = (2R)-3-phospho-glyceroyl phosphate + ADP</text>
        <dbReference type="Rhea" id="RHEA:14801"/>
        <dbReference type="ChEBI" id="CHEBI:30616"/>
        <dbReference type="ChEBI" id="CHEBI:57604"/>
        <dbReference type="ChEBI" id="CHEBI:58272"/>
        <dbReference type="ChEBI" id="CHEBI:456216"/>
        <dbReference type="EC" id="2.7.2.3"/>
    </reaction>
</comment>
<comment type="pathway">
    <text evidence="1">Carbohydrate degradation; glycolysis; pyruvate from D-glyceraldehyde 3-phosphate: step 2/5.</text>
</comment>
<comment type="subunit">
    <text evidence="1">Monomer.</text>
</comment>
<comment type="subcellular location">
    <subcellularLocation>
        <location evidence="1">Cytoplasm</location>
    </subcellularLocation>
</comment>
<comment type="similarity">
    <text evidence="1">Belongs to the phosphoglycerate kinase family.</text>
</comment>
<reference key="1">
    <citation type="journal article" date="2006" name="J. Bacteriol.">
        <title>Complete genome sequence of Yersinia pestis strains Antiqua and Nepal516: evidence of gene reduction in an emerging pathogen.</title>
        <authorList>
            <person name="Chain P.S.G."/>
            <person name="Hu P."/>
            <person name="Malfatti S.A."/>
            <person name="Radnedge L."/>
            <person name="Larimer F."/>
            <person name="Vergez L.M."/>
            <person name="Worsham P."/>
            <person name="Chu M.C."/>
            <person name="Andersen G.L."/>
        </authorList>
    </citation>
    <scope>NUCLEOTIDE SEQUENCE [LARGE SCALE GENOMIC DNA]</scope>
    <source>
        <strain>Nepal516</strain>
    </source>
</reference>
<reference key="2">
    <citation type="submission" date="2009-04" db="EMBL/GenBank/DDBJ databases">
        <title>Yersinia pestis Nepal516A whole genome shotgun sequencing project.</title>
        <authorList>
            <person name="Plunkett G. III"/>
            <person name="Anderson B.D."/>
            <person name="Baumler D.J."/>
            <person name="Burland V."/>
            <person name="Cabot E.L."/>
            <person name="Glasner J.D."/>
            <person name="Mau B."/>
            <person name="Neeno-Eckwall E."/>
            <person name="Perna N.T."/>
            <person name="Munk A.C."/>
            <person name="Tapia R."/>
            <person name="Green L.D."/>
            <person name="Rogers Y.C."/>
            <person name="Detter J.C."/>
            <person name="Bruce D.C."/>
            <person name="Brettin T.S."/>
        </authorList>
    </citation>
    <scope>NUCLEOTIDE SEQUENCE [LARGE SCALE GENOMIC DNA]</scope>
    <source>
        <strain>Nepal516</strain>
    </source>
</reference>
<evidence type="ECO:0000255" key="1">
    <source>
        <dbReference type="HAMAP-Rule" id="MF_00145"/>
    </source>
</evidence>
<protein>
    <recommendedName>
        <fullName evidence="1">Phosphoglycerate kinase</fullName>
        <ecNumber evidence="1">2.7.2.3</ecNumber>
    </recommendedName>
</protein>
<organism>
    <name type="scientific">Yersinia pestis bv. Antiqua (strain Nepal516)</name>
    <dbReference type="NCBI Taxonomy" id="377628"/>
    <lineage>
        <taxon>Bacteria</taxon>
        <taxon>Pseudomonadati</taxon>
        <taxon>Pseudomonadota</taxon>
        <taxon>Gammaproteobacteria</taxon>
        <taxon>Enterobacterales</taxon>
        <taxon>Yersiniaceae</taxon>
        <taxon>Yersinia</taxon>
    </lineage>
</organism>
<feature type="chain" id="PRO_1000058098" description="Phosphoglycerate kinase">
    <location>
        <begin position="1"/>
        <end position="387"/>
    </location>
</feature>
<feature type="binding site" evidence="1">
    <location>
        <begin position="21"/>
        <end position="23"/>
    </location>
    <ligand>
        <name>substrate</name>
    </ligand>
</feature>
<feature type="binding site" evidence="1">
    <location>
        <position position="36"/>
    </location>
    <ligand>
        <name>substrate</name>
    </ligand>
</feature>
<feature type="binding site" evidence="1">
    <location>
        <begin position="59"/>
        <end position="62"/>
    </location>
    <ligand>
        <name>substrate</name>
    </ligand>
</feature>
<feature type="binding site" evidence="1">
    <location>
        <position position="113"/>
    </location>
    <ligand>
        <name>substrate</name>
    </ligand>
</feature>
<feature type="binding site" evidence="1">
    <location>
        <position position="146"/>
    </location>
    <ligand>
        <name>substrate</name>
    </ligand>
</feature>
<feature type="binding site" evidence="1">
    <location>
        <position position="197"/>
    </location>
    <ligand>
        <name>ATP</name>
        <dbReference type="ChEBI" id="CHEBI:30616"/>
    </ligand>
</feature>
<feature type="binding site" evidence="1">
    <location>
        <position position="314"/>
    </location>
    <ligand>
        <name>ATP</name>
        <dbReference type="ChEBI" id="CHEBI:30616"/>
    </ligand>
</feature>
<feature type="binding site" evidence="1">
    <location>
        <begin position="340"/>
        <end position="343"/>
    </location>
    <ligand>
        <name>ATP</name>
        <dbReference type="ChEBI" id="CHEBI:30616"/>
    </ligand>
</feature>
<sequence>MSVIKMTDLDLAGKRVLIRADLNVPVKEGKVTSDARIRASLPTIEAALKQGAKVMVTSHLGRPTEGEYNEEFSLLPVVNYLKEKLSSPVRLAKDYLDGVEIAAGELVVLENVRFNKGEKKDDEALSKKYAALCDVYVMDAFGTAHRAQASTHGVGKFAPIACAGPLLSAELEALGKALGNPARPMVAIVGGSKVSTKLTVLGALSKIADKLIVGGGIANTFVAAQGHNVGKSLYEADLIPEAKRLLETCDIPVPTDVRVATEFSETAAATLKPANEIKDDEQILDLGDESAERLAEILKNAKTILWNGPVGVFEFPNFRKGTEIVARAIAESEAFSIAGGGDTLAAIDLFGIADQISYISTGGGAFLEFVEGKKLPAVVMLEERAKQ</sequence>
<accession>Q1CEY3</accession>
<accession>C4GXG2</accession>
<dbReference type="EC" id="2.7.2.3" evidence="1"/>
<dbReference type="EMBL" id="CP000305">
    <property type="protein sequence ID" value="ABG19447.1"/>
    <property type="molecule type" value="Genomic_DNA"/>
</dbReference>
<dbReference type="EMBL" id="ACNQ01000017">
    <property type="protein sequence ID" value="EEO75612.1"/>
    <property type="molecule type" value="Genomic_DNA"/>
</dbReference>
<dbReference type="RefSeq" id="WP_002209963.1">
    <property type="nucleotide sequence ID" value="NZ_ACNQ01000017.1"/>
</dbReference>
<dbReference type="SMR" id="Q1CEY3"/>
<dbReference type="GeneID" id="57973719"/>
<dbReference type="KEGG" id="ypn:YPN_3120"/>
<dbReference type="HOGENOM" id="CLU_025427_0_2_6"/>
<dbReference type="UniPathway" id="UPA00109">
    <property type="reaction ID" value="UER00185"/>
</dbReference>
<dbReference type="Proteomes" id="UP000008936">
    <property type="component" value="Chromosome"/>
</dbReference>
<dbReference type="GO" id="GO:0005829">
    <property type="term" value="C:cytosol"/>
    <property type="evidence" value="ECO:0007669"/>
    <property type="project" value="TreeGrafter"/>
</dbReference>
<dbReference type="GO" id="GO:0043531">
    <property type="term" value="F:ADP binding"/>
    <property type="evidence" value="ECO:0007669"/>
    <property type="project" value="TreeGrafter"/>
</dbReference>
<dbReference type="GO" id="GO:0005524">
    <property type="term" value="F:ATP binding"/>
    <property type="evidence" value="ECO:0007669"/>
    <property type="project" value="UniProtKB-KW"/>
</dbReference>
<dbReference type="GO" id="GO:0004618">
    <property type="term" value="F:phosphoglycerate kinase activity"/>
    <property type="evidence" value="ECO:0007669"/>
    <property type="project" value="UniProtKB-UniRule"/>
</dbReference>
<dbReference type="GO" id="GO:0006094">
    <property type="term" value="P:gluconeogenesis"/>
    <property type="evidence" value="ECO:0007669"/>
    <property type="project" value="TreeGrafter"/>
</dbReference>
<dbReference type="GO" id="GO:0006096">
    <property type="term" value="P:glycolytic process"/>
    <property type="evidence" value="ECO:0007669"/>
    <property type="project" value="UniProtKB-UniRule"/>
</dbReference>
<dbReference type="FunFam" id="3.40.50.1260:FF:000001">
    <property type="entry name" value="Phosphoglycerate kinase"/>
    <property type="match status" value="1"/>
</dbReference>
<dbReference type="FunFam" id="3.40.50.1260:FF:000002">
    <property type="entry name" value="Phosphoglycerate kinase"/>
    <property type="match status" value="1"/>
</dbReference>
<dbReference type="Gene3D" id="3.40.50.1260">
    <property type="entry name" value="Phosphoglycerate kinase, N-terminal domain"/>
    <property type="match status" value="2"/>
</dbReference>
<dbReference type="HAMAP" id="MF_00145">
    <property type="entry name" value="Phosphoglyc_kinase"/>
    <property type="match status" value="1"/>
</dbReference>
<dbReference type="InterPro" id="IPR001576">
    <property type="entry name" value="Phosphoglycerate_kinase"/>
</dbReference>
<dbReference type="InterPro" id="IPR015911">
    <property type="entry name" value="Phosphoglycerate_kinase_CS"/>
</dbReference>
<dbReference type="InterPro" id="IPR015824">
    <property type="entry name" value="Phosphoglycerate_kinase_N"/>
</dbReference>
<dbReference type="InterPro" id="IPR036043">
    <property type="entry name" value="Phosphoglycerate_kinase_sf"/>
</dbReference>
<dbReference type="PANTHER" id="PTHR11406">
    <property type="entry name" value="PHOSPHOGLYCERATE KINASE"/>
    <property type="match status" value="1"/>
</dbReference>
<dbReference type="PANTHER" id="PTHR11406:SF23">
    <property type="entry name" value="PHOSPHOGLYCERATE KINASE 1, CHLOROPLASTIC-RELATED"/>
    <property type="match status" value="1"/>
</dbReference>
<dbReference type="Pfam" id="PF00162">
    <property type="entry name" value="PGK"/>
    <property type="match status" value="1"/>
</dbReference>
<dbReference type="PIRSF" id="PIRSF000724">
    <property type="entry name" value="Pgk"/>
    <property type="match status" value="1"/>
</dbReference>
<dbReference type="PRINTS" id="PR00477">
    <property type="entry name" value="PHGLYCKINASE"/>
</dbReference>
<dbReference type="SUPFAM" id="SSF53748">
    <property type="entry name" value="Phosphoglycerate kinase"/>
    <property type="match status" value="1"/>
</dbReference>
<dbReference type="PROSITE" id="PS00111">
    <property type="entry name" value="PGLYCERATE_KINASE"/>
    <property type="match status" value="1"/>
</dbReference>
<keyword id="KW-0067">ATP-binding</keyword>
<keyword id="KW-0963">Cytoplasm</keyword>
<keyword id="KW-0324">Glycolysis</keyword>
<keyword id="KW-0418">Kinase</keyword>
<keyword id="KW-0547">Nucleotide-binding</keyword>
<keyword id="KW-0808">Transferase</keyword>